<feature type="chain" id="PRO_0000085851" description="Serine/threonine-protein kinase Chk1">
    <location>
        <begin position="1"/>
        <end position="476"/>
    </location>
</feature>
<feature type="domain" description="Protein kinase" evidence="4">
    <location>
        <begin position="9"/>
        <end position="265"/>
    </location>
</feature>
<feature type="region of interest" description="Disordered" evidence="6">
    <location>
        <begin position="272"/>
        <end position="329"/>
    </location>
</feature>
<feature type="region of interest" description="Autoinhibitory region" evidence="1">
    <location>
        <begin position="391"/>
        <end position="476"/>
    </location>
</feature>
<feature type="active site" description="Proton acceptor" evidence="4 5">
    <location>
        <position position="130"/>
    </location>
</feature>
<feature type="binding site" evidence="4">
    <location>
        <begin position="15"/>
        <end position="23"/>
    </location>
    <ligand>
        <name>ATP</name>
        <dbReference type="ChEBI" id="CHEBI:30616"/>
    </ligand>
</feature>
<feature type="binding site" evidence="4">
    <location>
        <position position="38"/>
    </location>
    <ligand>
        <name>ATP</name>
        <dbReference type="ChEBI" id="CHEBI:30616"/>
    </ligand>
</feature>
<feature type="modified residue" description="Phosphoserine; by PKB/AKT1" evidence="2">
    <location>
        <position position="280"/>
    </location>
</feature>
<feature type="modified residue" description="Phosphoserine" evidence="2">
    <location>
        <position position="296"/>
    </location>
</feature>
<feature type="modified residue" description="Phosphoserine; by ATM and ATR" evidence="2">
    <location>
        <position position="317"/>
    </location>
</feature>
<feature type="modified residue" description="Phosphoserine" evidence="7">
    <location>
        <position position="345"/>
    </location>
</feature>
<comment type="function">
    <text evidence="2 7">Serine/threonine-protein kinase which is required for checkpoint-mediated cell cycle arrest and activation of DNA repair in response to the presence of DNA damage or unreplicated DNA (PubMed:12554671). May also negatively regulate cell cycle progression during unperturbed cell cycles. This regulation is achieved by a number of mechanisms that together help to preserve the integrity of the genome. Recognizes the substrate consensus sequence [R-X-X-S/T]. Binds to and phosphorylates CDC25A, CDC25B and CDC25C. This inhibits their activity through proteasomal degradation, nucleo-cytoplasmic shuttling and inhibition by proteins of the 13-3-3 family. Inhibition of CDC25 leads to increased inhibitory tyrosine phosphorylation of CDK-cyclin complexes and blocks cell cycle progression. May promote DNA repair, regulate chromatin assembly and the transcription of genes that regulate cell-cycle progression. May also play a role in replication fork maintenance (By similarity).</text>
</comment>
<comment type="catalytic activity">
    <reaction evidence="2">
        <text>L-seryl-[protein] + ATP = O-phospho-L-seryl-[protein] + ADP + H(+)</text>
        <dbReference type="Rhea" id="RHEA:17989"/>
        <dbReference type="Rhea" id="RHEA-COMP:9863"/>
        <dbReference type="Rhea" id="RHEA-COMP:11604"/>
        <dbReference type="ChEBI" id="CHEBI:15378"/>
        <dbReference type="ChEBI" id="CHEBI:29999"/>
        <dbReference type="ChEBI" id="CHEBI:30616"/>
        <dbReference type="ChEBI" id="CHEBI:83421"/>
        <dbReference type="ChEBI" id="CHEBI:456216"/>
        <dbReference type="EC" id="2.7.11.1"/>
    </reaction>
</comment>
<comment type="catalytic activity">
    <reaction evidence="2">
        <text>L-threonyl-[protein] + ATP = O-phospho-L-threonyl-[protein] + ADP + H(+)</text>
        <dbReference type="Rhea" id="RHEA:46608"/>
        <dbReference type="Rhea" id="RHEA-COMP:11060"/>
        <dbReference type="Rhea" id="RHEA-COMP:11605"/>
        <dbReference type="ChEBI" id="CHEBI:15378"/>
        <dbReference type="ChEBI" id="CHEBI:30013"/>
        <dbReference type="ChEBI" id="CHEBI:30616"/>
        <dbReference type="ChEBI" id="CHEBI:61977"/>
        <dbReference type="ChEBI" id="CHEBI:456216"/>
        <dbReference type="EC" id="2.7.11.1"/>
    </reaction>
</comment>
<comment type="activity regulation">
    <text evidence="2">Activated through phosphorylation by atr or atm in response to DNA damage or inhibition of DNA replication.</text>
</comment>
<comment type="subcellular location">
    <subcellularLocation>
        <location evidence="2">Nucleus</location>
    </subcellularLocation>
    <subcellularLocation>
        <location evidence="2">Chromosome</location>
    </subcellularLocation>
    <subcellularLocation>
        <location evidence="2">Cytoplasm</location>
    </subcellularLocation>
    <subcellularLocation>
        <location evidence="2">Cytoplasm</location>
        <location evidence="2">Cytoskeleton</location>
        <location evidence="2">Microtubule organizing center</location>
        <location evidence="2">Centrosome</location>
    </subcellularLocation>
</comment>
<comment type="domain">
    <text evidence="3">The autoinhibitory region (AIR) inhibits the activity of the kinase domain.</text>
</comment>
<comment type="PTM">
    <text evidence="2 7">Phosphorylated by ATR in a RAD17-dependent manner in response to ultraviolet irradiation and inhibition of DNA replication. Phosphorylated by ATM in response to ionizing irradiation (By similarity). Phosphorylation at Ser-345 induces a change in the conformation of the protein and activates the kinase activity. Phosphorylation at Ser-345 also increases binding to 14-3-3 proteins and promotes nuclear retention (PubMed:12554671).</text>
</comment>
<comment type="similarity">
    <text evidence="8">Belongs to the protein kinase superfamily. CAMK Ser/Thr protein kinase family. NIM1 subfamily.</text>
</comment>
<sequence>MAVPFVEDWDLVQTLGEGAYGEVQLAVNRRTEEAVAVKIVDMKRAADCPENIKKEICINKMLNHENVVKFYGHRREGATQYLFLEYCSGGELFDRIEPDIGMPEPEAQRFFQQLIAGVVYLHSMGITHRDLKPENLLLDERDNLKISDFGLATVFKHNGRERLLNKMCGTLPYVAPELLRRPEFRAEPVDVWACGVVLTAMLAGELPWDQPSDSCQEYSDWKERKTYLAPWRKIDSAPLALLHKILTENPTARITIPDIKKDRWYCRPLKKGTKRGRVSSGGVTESPGALPKHIRSDTDFSPVKSALGEDKASYSTSQPEPGTGGALWDSSTGSIDRLVQGISFSQPACPEHMLLNSQLLGTPGSSQSPWQRLVRRMTRFFTKLDADGSYRSLRDVCEKMGYGWKQSCTNQVTISTTDRRNNKLIFKVNLLEMESRILVDFRLSKGDGLEFKRHFLKIKGKLSDVVSTQKVWLPPP</sequence>
<keyword id="KW-0067">ATP-binding</keyword>
<keyword id="KW-0131">Cell cycle</keyword>
<keyword id="KW-0158">Chromosome</keyword>
<keyword id="KW-0963">Cytoplasm</keyword>
<keyword id="KW-0206">Cytoskeleton</keyword>
<keyword id="KW-0227">DNA damage</keyword>
<keyword id="KW-0234">DNA repair</keyword>
<keyword id="KW-0418">Kinase</keyword>
<keyword id="KW-0547">Nucleotide-binding</keyword>
<keyword id="KW-0539">Nucleus</keyword>
<keyword id="KW-0597">Phosphoprotein</keyword>
<keyword id="KW-1185">Reference proteome</keyword>
<keyword id="KW-0723">Serine/threonine-protein kinase</keyword>
<keyword id="KW-0808">Transferase</keyword>
<proteinExistence type="evidence at protein level"/>
<dbReference type="EC" id="2.7.11.1" evidence="2"/>
<dbReference type="EMBL" id="AF525027">
    <property type="protein sequence ID" value="AAN33019.1"/>
    <property type="molecule type" value="mRNA"/>
</dbReference>
<dbReference type="RefSeq" id="NP_989676.1">
    <property type="nucleotide sequence ID" value="NM_204345.2"/>
</dbReference>
<dbReference type="SMR" id="Q8AYC9"/>
<dbReference type="BioGRID" id="675270">
    <property type="interactions" value="1"/>
</dbReference>
<dbReference type="FunCoup" id="Q8AYC9">
    <property type="interactions" value="2230"/>
</dbReference>
<dbReference type="iPTMnet" id="Q8AYC9"/>
<dbReference type="PaxDb" id="9031-ENSGALP00000001432"/>
<dbReference type="Ensembl" id="ENSGALT00000077386">
    <property type="protein sequence ID" value="ENSGALP00000080956"/>
    <property type="gene ID" value="ENSGALG00000042418"/>
</dbReference>
<dbReference type="Ensembl" id="ENSGALT00010058076.1">
    <property type="protein sequence ID" value="ENSGALP00010035254.1"/>
    <property type="gene ID" value="ENSGALG00010023828.1"/>
</dbReference>
<dbReference type="GeneID" id="374260"/>
<dbReference type="KEGG" id="gga:374260"/>
<dbReference type="CTD" id="1111"/>
<dbReference type="VEuPathDB" id="HostDB:geneid_374260"/>
<dbReference type="eggNOG" id="KOG0590">
    <property type="taxonomic scope" value="Eukaryota"/>
</dbReference>
<dbReference type="GeneTree" id="ENSGT00940000159682"/>
<dbReference type="InParanoid" id="Q8AYC9"/>
<dbReference type="OMA" id="GYTCKVG"/>
<dbReference type="OrthoDB" id="539158at2759"/>
<dbReference type="PhylomeDB" id="Q8AYC9"/>
<dbReference type="Reactome" id="R-GGA-217106">
    <property type="pathway name" value="Chk1-controlled and DNA-damage induced centrosome duplication"/>
</dbReference>
<dbReference type="Reactome" id="R-GGA-351433">
    <property type="pathway name" value="ATM mediated phosphorylation of repair proteins"/>
</dbReference>
<dbReference type="Reactome" id="R-GGA-351451">
    <property type="pathway name" value="Homologous recombination repair of replication-dependent double-strand breaks"/>
</dbReference>
<dbReference type="PRO" id="PR:Q8AYC9"/>
<dbReference type="Proteomes" id="UP000000539">
    <property type="component" value="Chromosome 24"/>
</dbReference>
<dbReference type="GO" id="GO:0005813">
    <property type="term" value="C:centrosome"/>
    <property type="evidence" value="ECO:0000250"/>
    <property type="project" value="UniProtKB"/>
</dbReference>
<dbReference type="GO" id="GO:0000785">
    <property type="term" value="C:chromatin"/>
    <property type="evidence" value="ECO:0000250"/>
    <property type="project" value="UniProtKB"/>
</dbReference>
<dbReference type="GO" id="GO:0000794">
    <property type="term" value="C:condensed nuclear chromosome"/>
    <property type="evidence" value="ECO:0000250"/>
    <property type="project" value="UniProtKB"/>
</dbReference>
<dbReference type="GO" id="GO:0005737">
    <property type="term" value="C:cytoplasm"/>
    <property type="evidence" value="ECO:0007669"/>
    <property type="project" value="UniProtKB-SubCell"/>
</dbReference>
<dbReference type="GO" id="GO:0005654">
    <property type="term" value="C:nucleoplasm"/>
    <property type="evidence" value="ECO:0000304"/>
    <property type="project" value="Reactome"/>
</dbReference>
<dbReference type="GO" id="GO:0005634">
    <property type="term" value="C:nucleus"/>
    <property type="evidence" value="ECO:0000250"/>
    <property type="project" value="UniProtKB"/>
</dbReference>
<dbReference type="GO" id="GO:0005524">
    <property type="term" value="F:ATP binding"/>
    <property type="evidence" value="ECO:0007669"/>
    <property type="project" value="UniProtKB-KW"/>
</dbReference>
<dbReference type="GO" id="GO:0035402">
    <property type="term" value="F:histone H3T11 kinase activity"/>
    <property type="evidence" value="ECO:0000250"/>
    <property type="project" value="UniProtKB"/>
</dbReference>
<dbReference type="GO" id="GO:0106310">
    <property type="term" value="F:protein serine kinase activity"/>
    <property type="evidence" value="ECO:0007669"/>
    <property type="project" value="RHEA"/>
</dbReference>
<dbReference type="GO" id="GO:0004674">
    <property type="term" value="F:protein serine/threonine kinase activity"/>
    <property type="evidence" value="ECO:0000250"/>
    <property type="project" value="UniProtKB"/>
</dbReference>
<dbReference type="GO" id="GO:0006338">
    <property type="term" value="P:chromatin remodeling"/>
    <property type="evidence" value="ECO:0000250"/>
    <property type="project" value="UniProtKB"/>
</dbReference>
<dbReference type="GO" id="GO:0000077">
    <property type="term" value="P:DNA damage checkpoint signaling"/>
    <property type="evidence" value="ECO:0000250"/>
    <property type="project" value="UniProtKB"/>
</dbReference>
<dbReference type="GO" id="GO:0006974">
    <property type="term" value="P:DNA damage response"/>
    <property type="evidence" value="ECO:0000250"/>
    <property type="project" value="UniProtKB"/>
</dbReference>
<dbReference type="GO" id="GO:0006281">
    <property type="term" value="P:DNA repair"/>
    <property type="evidence" value="ECO:0007669"/>
    <property type="project" value="UniProtKB-KW"/>
</dbReference>
<dbReference type="GO" id="GO:0007095">
    <property type="term" value="P:mitotic G2 DNA damage checkpoint signaling"/>
    <property type="evidence" value="ECO:0000250"/>
    <property type="project" value="UniProtKB"/>
</dbReference>
<dbReference type="GO" id="GO:0045814">
    <property type="term" value="P:negative regulation of gene expression, epigenetic"/>
    <property type="evidence" value="ECO:0000250"/>
    <property type="project" value="UniProtKB"/>
</dbReference>
<dbReference type="GO" id="GO:0045839">
    <property type="term" value="P:negative regulation of mitotic nuclear division"/>
    <property type="evidence" value="ECO:0000250"/>
    <property type="project" value="UniProtKB"/>
</dbReference>
<dbReference type="GO" id="GO:0018107">
    <property type="term" value="P:peptidyl-threonine phosphorylation"/>
    <property type="evidence" value="ECO:0000250"/>
    <property type="project" value="UniProtKB"/>
</dbReference>
<dbReference type="GO" id="GO:0010569">
    <property type="term" value="P:regulation of double-strand break repair via homologous recombination"/>
    <property type="evidence" value="ECO:0000250"/>
    <property type="project" value="UniProtKB"/>
</dbReference>
<dbReference type="GO" id="GO:0046602">
    <property type="term" value="P:regulation of mitotic centrosome separation"/>
    <property type="evidence" value="ECO:0000250"/>
    <property type="project" value="UniProtKB"/>
</dbReference>
<dbReference type="GO" id="GO:0042770">
    <property type="term" value="P:signal transduction in response to DNA damage"/>
    <property type="evidence" value="ECO:0000250"/>
    <property type="project" value="UniProtKB"/>
</dbReference>
<dbReference type="CDD" id="cd14069">
    <property type="entry name" value="STKc_Chk1"/>
    <property type="match status" value="1"/>
</dbReference>
<dbReference type="FunFam" id="1.10.510.10:FF:000301">
    <property type="entry name" value="Serine/threonine-protein kinase Chk1"/>
    <property type="match status" value="1"/>
</dbReference>
<dbReference type="FunFam" id="3.30.200.20:FF:000229">
    <property type="entry name" value="Serine/threonine-protein kinase Chk1"/>
    <property type="match status" value="1"/>
</dbReference>
<dbReference type="FunFam" id="3.30.310.80:FF:000007">
    <property type="entry name" value="Serine/threonine-protein kinase Chk1 isoform 1"/>
    <property type="match status" value="1"/>
</dbReference>
<dbReference type="Gene3D" id="3.30.310.80">
    <property type="entry name" value="Kinase associated domain 1, KA1"/>
    <property type="match status" value="1"/>
</dbReference>
<dbReference type="Gene3D" id="3.30.200.20">
    <property type="entry name" value="Phosphorylase Kinase, domain 1"/>
    <property type="match status" value="1"/>
</dbReference>
<dbReference type="Gene3D" id="1.10.510.10">
    <property type="entry name" value="Transferase(Phosphotransferase) domain 1"/>
    <property type="match status" value="1"/>
</dbReference>
<dbReference type="InterPro" id="IPR034670">
    <property type="entry name" value="Chk1_catalytic_dom"/>
</dbReference>
<dbReference type="InterPro" id="IPR011009">
    <property type="entry name" value="Kinase-like_dom_sf"/>
</dbReference>
<dbReference type="InterPro" id="IPR000719">
    <property type="entry name" value="Prot_kinase_dom"/>
</dbReference>
<dbReference type="InterPro" id="IPR017441">
    <property type="entry name" value="Protein_kinase_ATP_BS"/>
</dbReference>
<dbReference type="InterPro" id="IPR008271">
    <property type="entry name" value="Ser/Thr_kinase_AS"/>
</dbReference>
<dbReference type="PANTHER" id="PTHR24346">
    <property type="entry name" value="MAP/MICROTUBULE AFFINITY-REGULATING KINASE"/>
    <property type="match status" value="1"/>
</dbReference>
<dbReference type="PANTHER" id="PTHR24346:SF107">
    <property type="entry name" value="SERINE_THREONINE-PROTEIN KINASE CHK1"/>
    <property type="match status" value="1"/>
</dbReference>
<dbReference type="Pfam" id="PF00069">
    <property type="entry name" value="Pkinase"/>
    <property type="match status" value="1"/>
</dbReference>
<dbReference type="SMART" id="SM00220">
    <property type="entry name" value="S_TKc"/>
    <property type="match status" value="1"/>
</dbReference>
<dbReference type="SUPFAM" id="SSF56112">
    <property type="entry name" value="Protein kinase-like (PK-like)"/>
    <property type="match status" value="1"/>
</dbReference>
<dbReference type="PROSITE" id="PS00107">
    <property type="entry name" value="PROTEIN_KINASE_ATP"/>
    <property type="match status" value="1"/>
</dbReference>
<dbReference type="PROSITE" id="PS50011">
    <property type="entry name" value="PROTEIN_KINASE_DOM"/>
    <property type="match status" value="1"/>
</dbReference>
<dbReference type="PROSITE" id="PS00108">
    <property type="entry name" value="PROTEIN_KINASE_ST"/>
    <property type="match status" value="1"/>
</dbReference>
<evidence type="ECO:0000250" key="1"/>
<evidence type="ECO:0000250" key="2">
    <source>
        <dbReference type="UniProtKB" id="O14757"/>
    </source>
</evidence>
<evidence type="ECO:0000250" key="3">
    <source>
        <dbReference type="UniProtKB" id="Q6DE87"/>
    </source>
</evidence>
<evidence type="ECO:0000255" key="4">
    <source>
        <dbReference type="PROSITE-ProRule" id="PRU00159"/>
    </source>
</evidence>
<evidence type="ECO:0000255" key="5">
    <source>
        <dbReference type="PROSITE-ProRule" id="PRU10027"/>
    </source>
</evidence>
<evidence type="ECO:0000256" key="6">
    <source>
        <dbReference type="SAM" id="MobiDB-lite"/>
    </source>
</evidence>
<evidence type="ECO:0000269" key="7">
    <source>
    </source>
</evidence>
<evidence type="ECO:0000305" key="8"/>
<accession>Q8AYC9</accession>
<protein>
    <recommendedName>
        <fullName>Serine/threonine-protein kinase Chk1</fullName>
        <ecNumber evidence="2">2.7.11.1</ecNumber>
    </recommendedName>
    <alternativeName>
        <fullName>CHK1 checkpoint homolog</fullName>
    </alternativeName>
    <alternativeName>
        <fullName>Checkpoint kinase-1</fullName>
    </alternativeName>
</protein>
<reference key="1">
    <citation type="journal article" date="2003" name="EMBO J.">
        <title>Chk1-deficient tumour cells are viable but exhibit multiple checkpoint and survival defects.</title>
        <authorList>
            <person name="Zachos G."/>
            <person name="Rainey M.D."/>
            <person name="Gillespie D.A.F."/>
        </authorList>
    </citation>
    <scope>NUCLEOTIDE SEQUENCE [MRNA]</scope>
    <scope>FUNCTION</scope>
    <scope>PHOSPHORYLATION AT SER-345</scope>
</reference>
<name>CHK1_CHICK</name>
<gene>
    <name type="primary">CHEK1</name>
    <name type="synonym">CHK1</name>
</gene>
<organism>
    <name type="scientific">Gallus gallus</name>
    <name type="common">Chicken</name>
    <dbReference type="NCBI Taxonomy" id="9031"/>
    <lineage>
        <taxon>Eukaryota</taxon>
        <taxon>Metazoa</taxon>
        <taxon>Chordata</taxon>
        <taxon>Craniata</taxon>
        <taxon>Vertebrata</taxon>
        <taxon>Euteleostomi</taxon>
        <taxon>Archelosauria</taxon>
        <taxon>Archosauria</taxon>
        <taxon>Dinosauria</taxon>
        <taxon>Saurischia</taxon>
        <taxon>Theropoda</taxon>
        <taxon>Coelurosauria</taxon>
        <taxon>Aves</taxon>
        <taxon>Neognathae</taxon>
        <taxon>Galloanserae</taxon>
        <taxon>Galliformes</taxon>
        <taxon>Phasianidae</taxon>
        <taxon>Phasianinae</taxon>
        <taxon>Gallus</taxon>
    </lineage>
</organism>